<organism>
    <name type="scientific">Exiguobacterium sp. (strain ATCC BAA-1283 / AT1b)</name>
    <dbReference type="NCBI Taxonomy" id="360911"/>
    <lineage>
        <taxon>Bacteria</taxon>
        <taxon>Bacillati</taxon>
        <taxon>Bacillota</taxon>
        <taxon>Bacilli</taxon>
        <taxon>Bacillales</taxon>
        <taxon>Bacillales Family XII. Incertae Sedis</taxon>
        <taxon>Exiguobacterium</taxon>
    </lineage>
</organism>
<dbReference type="EMBL" id="CP001615">
    <property type="protein sequence ID" value="ACQ70535.1"/>
    <property type="molecule type" value="Genomic_DNA"/>
</dbReference>
<dbReference type="RefSeq" id="WP_003156543.1">
    <property type="nucleotide sequence ID" value="NZ_MOEL01000001.1"/>
</dbReference>
<dbReference type="SMR" id="C4KZM2"/>
<dbReference type="STRING" id="360911.EAT1b_1609"/>
<dbReference type="GeneID" id="97412846"/>
<dbReference type="KEGG" id="eat:EAT1b_1609"/>
<dbReference type="eggNOG" id="COG0257">
    <property type="taxonomic scope" value="Bacteria"/>
</dbReference>
<dbReference type="HOGENOM" id="CLU_135723_6_2_9"/>
<dbReference type="OrthoDB" id="9802520at2"/>
<dbReference type="Proteomes" id="UP000000716">
    <property type="component" value="Chromosome"/>
</dbReference>
<dbReference type="GO" id="GO:0005737">
    <property type="term" value="C:cytoplasm"/>
    <property type="evidence" value="ECO:0007669"/>
    <property type="project" value="UniProtKB-ARBA"/>
</dbReference>
<dbReference type="GO" id="GO:1990904">
    <property type="term" value="C:ribonucleoprotein complex"/>
    <property type="evidence" value="ECO:0007669"/>
    <property type="project" value="UniProtKB-KW"/>
</dbReference>
<dbReference type="GO" id="GO:0005840">
    <property type="term" value="C:ribosome"/>
    <property type="evidence" value="ECO:0007669"/>
    <property type="project" value="UniProtKB-KW"/>
</dbReference>
<dbReference type="GO" id="GO:0003735">
    <property type="term" value="F:structural constituent of ribosome"/>
    <property type="evidence" value="ECO:0007669"/>
    <property type="project" value="InterPro"/>
</dbReference>
<dbReference type="GO" id="GO:0006412">
    <property type="term" value="P:translation"/>
    <property type="evidence" value="ECO:0007669"/>
    <property type="project" value="UniProtKB-UniRule"/>
</dbReference>
<dbReference type="HAMAP" id="MF_00251">
    <property type="entry name" value="Ribosomal_bL36"/>
    <property type="match status" value="1"/>
</dbReference>
<dbReference type="InterPro" id="IPR000473">
    <property type="entry name" value="Ribosomal_bL36"/>
</dbReference>
<dbReference type="InterPro" id="IPR035977">
    <property type="entry name" value="Ribosomal_bL36_sp"/>
</dbReference>
<dbReference type="NCBIfam" id="TIGR01022">
    <property type="entry name" value="rpmJ_bact"/>
    <property type="match status" value="1"/>
</dbReference>
<dbReference type="PANTHER" id="PTHR42888">
    <property type="entry name" value="50S RIBOSOMAL PROTEIN L36, CHLOROPLASTIC"/>
    <property type="match status" value="1"/>
</dbReference>
<dbReference type="PANTHER" id="PTHR42888:SF1">
    <property type="entry name" value="LARGE RIBOSOMAL SUBUNIT PROTEIN BL36C"/>
    <property type="match status" value="1"/>
</dbReference>
<dbReference type="Pfam" id="PF00444">
    <property type="entry name" value="Ribosomal_L36"/>
    <property type="match status" value="1"/>
</dbReference>
<dbReference type="SUPFAM" id="SSF57840">
    <property type="entry name" value="Ribosomal protein L36"/>
    <property type="match status" value="1"/>
</dbReference>
<dbReference type="PROSITE" id="PS00828">
    <property type="entry name" value="RIBOSOMAL_L36"/>
    <property type="match status" value="1"/>
</dbReference>
<accession>C4KZM2</accession>
<sequence length="37" mass="4305">MKVRPSVKPICEKCKVIRRKGKVMVICENPKHKQKQG</sequence>
<keyword id="KW-0687">Ribonucleoprotein</keyword>
<keyword id="KW-0689">Ribosomal protein</keyword>
<protein>
    <recommendedName>
        <fullName evidence="1">Large ribosomal subunit protein bL36</fullName>
    </recommendedName>
    <alternativeName>
        <fullName evidence="2">50S ribosomal protein L36</fullName>
    </alternativeName>
</protein>
<gene>
    <name evidence="1" type="primary">rpmJ</name>
    <name type="ordered locus">EAT1b_1609</name>
</gene>
<reference key="1">
    <citation type="journal article" date="2011" name="J. Bacteriol.">
        <title>Complete genome sequence of the Thermophilic Bacterium Exiguobacterium sp. AT1b.</title>
        <authorList>
            <person name="Vishnivetskaya T.A."/>
            <person name="Lucas S."/>
            <person name="Copeland A."/>
            <person name="Lapidus A."/>
            <person name="Glavina del Rio T."/>
            <person name="Dalin E."/>
            <person name="Tice H."/>
            <person name="Bruce D.C."/>
            <person name="Goodwin L.A."/>
            <person name="Pitluck S."/>
            <person name="Saunders E."/>
            <person name="Brettin T."/>
            <person name="Detter C."/>
            <person name="Han C."/>
            <person name="Larimer F."/>
            <person name="Land M.L."/>
            <person name="Hauser L.J."/>
            <person name="Kyrpides N.C."/>
            <person name="Ovchinnikova G."/>
            <person name="Kathariou S."/>
            <person name="Ramaley R.F."/>
            <person name="Rodrigues D.F."/>
            <person name="Hendrix C."/>
            <person name="Richardson P."/>
            <person name="Tiedje J.M."/>
        </authorList>
    </citation>
    <scope>NUCLEOTIDE SEQUENCE [LARGE SCALE GENOMIC DNA]</scope>
    <source>
        <strain>ATCC BAA-1283 / AT1b</strain>
    </source>
</reference>
<evidence type="ECO:0000255" key="1">
    <source>
        <dbReference type="HAMAP-Rule" id="MF_00251"/>
    </source>
</evidence>
<evidence type="ECO:0000305" key="2"/>
<comment type="similarity">
    <text evidence="1">Belongs to the bacterial ribosomal protein bL36 family.</text>
</comment>
<feature type="chain" id="PRO_1000204550" description="Large ribosomal subunit protein bL36">
    <location>
        <begin position="1"/>
        <end position="37"/>
    </location>
</feature>
<name>RL36_EXISA</name>
<proteinExistence type="inferred from homology"/>